<accession>P02212</accession>
<evidence type="ECO:0000255" key="1">
    <source>
        <dbReference type="PROSITE-ProRule" id="PRU00238"/>
    </source>
</evidence>
<reference key="1">
    <citation type="journal article" date="1983" name="Biochemistry">
        <title>Dimeric hemoglobin of the bivalve mollusc Anadara broughtonii: complete amino acid sequence of the globin chain.</title>
        <authorList>
            <person name="Furuta H."/>
            <person name="Kajita A."/>
        </authorList>
    </citation>
    <scope>PROTEIN SEQUENCE</scope>
</reference>
<protein>
    <recommendedName>
        <fullName>Globin-1</fullName>
    </recommendedName>
    <alternativeName>
        <fullName>Globin I</fullName>
    </alternativeName>
    <alternativeName>
        <fullName>HbI</fullName>
    </alternativeName>
</protein>
<organism>
    <name type="scientific">Anadara broughtonii</name>
    <name type="common">Blood clam</name>
    <name type="synonym">Scapharca broughtonii</name>
    <dbReference type="NCBI Taxonomy" id="148819"/>
    <lineage>
        <taxon>Eukaryota</taxon>
        <taxon>Metazoa</taxon>
        <taxon>Spiralia</taxon>
        <taxon>Lophotrochozoa</taxon>
        <taxon>Mollusca</taxon>
        <taxon>Bivalvia</taxon>
        <taxon>Autobranchia</taxon>
        <taxon>Pteriomorphia</taxon>
        <taxon>Arcoida</taxon>
        <taxon>Arcoidea</taxon>
        <taxon>Arcidae</taxon>
        <taxon>Anadara</taxon>
    </lineage>
</organism>
<keyword id="KW-0963">Cytoplasm</keyword>
<keyword id="KW-0903">Direct protein sequencing</keyword>
<keyword id="KW-0349">Heme</keyword>
<keyword id="KW-0408">Iron</keyword>
<keyword id="KW-0479">Metal-binding</keyword>
<keyword id="KW-0561">Oxygen transport</keyword>
<keyword id="KW-0813">Transport</keyword>
<name>GLB1_ANABR</name>
<comment type="subunit">
    <text>Homodimer.</text>
</comment>
<comment type="subcellular location">
    <subcellularLocation>
        <location>Cytoplasm</location>
    </subcellularLocation>
</comment>
<comment type="similarity">
    <text evidence="1">Belongs to the globin family.</text>
</comment>
<feature type="chain" id="PRO_0000052482" description="Globin-1">
    <location>
        <begin position="1"/>
        <end position="146"/>
    </location>
</feature>
<feature type="domain" description="Globin" evidence="1">
    <location>
        <begin position="9"/>
        <end position="146"/>
    </location>
</feature>
<feature type="binding site" description="proximal binding residue" evidence="1">
    <location>
        <position position="101"/>
    </location>
    <ligand>
        <name>heme b</name>
        <dbReference type="ChEBI" id="CHEBI:60344"/>
    </ligand>
    <ligandPart>
        <name>Fe</name>
        <dbReference type="ChEBI" id="CHEBI:18248"/>
    </ligandPart>
</feature>
<dbReference type="PIR" id="A02534">
    <property type="entry name" value="GGNKIB"/>
</dbReference>
<dbReference type="SMR" id="P02212"/>
<dbReference type="GO" id="GO:0005737">
    <property type="term" value="C:cytoplasm"/>
    <property type="evidence" value="ECO:0007669"/>
    <property type="project" value="UniProtKB-SubCell"/>
</dbReference>
<dbReference type="GO" id="GO:0020037">
    <property type="term" value="F:heme binding"/>
    <property type="evidence" value="ECO:0007669"/>
    <property type="project" value="InterPro"/>
</dbReference>
<dbReference type="GO" id="GO:0046872">
    <property type="term" value="F:metal ion binding"/>
    <property type="evidence" value="ECO:0007669"/>
    <property type="project" value="UniProtKB-KW"/>
</dbReference>
<dbReference type="GO" id="GO:0019825">
    <property type="term" value="F:oxygen binding"/>
    <property type="evidence" value="ECO:0007669"/>
    <property type="project" value="InterPro"/>
</dbReference>
<dbReference type="GO" id="GO:0005344">
    <property type="term" value="F:oxygen carrier activity"/>
    <property type="evidence" value="ECO:0007669"/>
    <property type="project" value="UniProtKB-KW"/>
</dbReference>
<dbReference type="CDD" id="cd01040">
    <property type="entry name" value="Mb-like"/>
    <property type="match status" value="1"/>
</dbReference>
<dbReference type="Gene3D" id="1.10.490.10">
    <property type="entry name" value="Globins"/>
    <property type="match status" value="1"/>
</dbReference>
<dbReference type="InterPro" id="IPR000971">
    <property type="entry name" value="Globin"/>
</dbReference>
<dbReference type="InterPro" id="IPR050532">
    <property type="entry name" value="Globin-like_OT"/>
</dbReference>
<dbReference type="InterPro" id="IPR009050">
    <property type="entry name" value="Globin-like_sf"/>
</dbReference>
<dbReference type="InterPro" id="IPR012292">
    <property type="entry name" value="Globin/Proto"/>
</dbReference>
<dbReference type="InterPro" id="IPR044399">
    <property type="entry name" value="Mb-like_M"/>
</dbReference>
<dbReference type="PANTHER" id="PTHR46458">
    <property type="entry name" value="BLR2807 PROTEIN"/>
    <property type="match status" value="1"/>
</dbReference>
<dbReference type="PANTHER" id="PTHR46458:SF1">
    <property type="entry name" value="GEO09476P1"/>
    <property type="match status" value="1"/>
</dbReference>
<dbReference type="Pfam" id="PF00042">
    <property type="entry name" value="Globin"/>
    <property type="match status" value="1"/>
</dbReference>
<dbReference type="SUPFAM" id="SSF46458">
    <property type="entry name" value="Globin-like"/>
    <property type="match status" value="1"/>
</dbReference>
<dbReference type="PROSITE" id="PS01033">
    <property type="entry name" value="GLOBIN"/>
    <property type="match status" value="1"/>
</dbReference>
<proteinExistence type="evidence at protein level"/>
<sequence length="146" mass="15856">PSVQGAAAQLTADVKKDLRDSWKVIGSDKKGNGVALMTTLFADNQETIGYFKRLGNVSQGMANDKLRGHSITLMYALQNFIDQLDNTDDLVCVVEKFAVNHITRKISAAEFGKINGPIKKVLASKNFGDKYANAWAKLVAVVQAAL</sequence>